<gene>
    <name evidence="1" type="primary">murB</name>
    <name type="ordered locus">SDY_3756</name>
</gene>
<dbReference type="EC" id="1.3.1.98" evidence="1"/>
<dbReference type="EMBL" id="CP000034">
    <property type="protein sequence ID" value="ABB63707.1"/>
    <property type="molecule type" value="Genomic_DNA"/>
</dbReference>
<dbReference type="RefSeq" id="WP_001016672.1">
    <property type="nucleotide sequence ID" value="NC_007606.1"/>
</dbReference>
<dbReference type="RefSeq" id="YP_405198.1">
    <property type="nucleotide sequence ID" value="NC_007606.1"/>
</dbReference>
<dbReference type="SMR" id="Q32AE8"/>
<dbReference type="STRING" id="300267.SDY_3756"/>
<dbReference type="EnsemblBacteria" id="ABB63707">
    <property type="protein sequence ID" value="ABB63707"/>
    <property type="gene ID" value="SDY_3756"/>
</dbReference>
<dbReference type="KEGG" id="sdy:SDY_3756"/>
<dbReference type="PATRIC" id="fig|300267.13.peg.4447"/>
<dbReference type="HOGENOM" id="CLU_035304_0_0_6"/>
<dbReference type="UniPathway" id="UPA00219"/>
<dbReference type="Proteomes" id="UP000002716">
    <property type="component" value="Chromosome"/>
</dbReference>
<dbReference type="GO" id="GO:0005829">
    <property type="term" value="C:cytosol"/>
    <property type="evidence" value="ECO:0007669"/>
    <property type="project" value="TreeGrafter"/>
</dbReference>
<dbReference type="GO" id="GO:0071949">
    <property type="term" value="F:FAD binding"/>
    <property type="evidence" value="ECO:0007669"/>
    <property type="project" value="InterPro"/>
</dbReference>
<dbReference type="GO" id="GO:0008762">
    <property type="term" value="F:UDP-N-acetylmuramate dehydrogenase activity"/>
    <property type="evidence" value="ECO:0007669"/>
    <property type="project" value="UniProtKB-UniRule"/>
</dbReference>
<dbReference type="GO" id="GO:0051301">
    <property type="term" value="P:cell division"/>
    <property type="evidence" value="ECO:0007669"/>
    <property type="project" value="UniProtKB-KW"/>
</dbReference>
<dbReference type="GO" id="GO:0071555">
    <property type="term" value="P:cell wall organization"/>
    <property type="evidence" value="ECO:0007669"/>
    <property type="project" value="UniProtKB-KW"/>
</dbReference>
<dbReference type="GO" id="GO:0009252">
    <property type="term" value="P:peptidoglycan biosynthetic process"/>
    <property type="evidence" value="ECO:0007669"/>
    <property type="project" value="UniProtKB-UniRule"/>
</dbReference>
<dbReference type="GO" id="GO:0008360">
    <property type="term" value="P:regulation of cell shape"/>
    <property type="evidence" value="ECO:0007669"/>
    <property type="project" value="UniProtKB-KW"/>
</dbReference>
<dbReference type="FunFam" id="3.30.465.10:FF:000018">
    <property type="entry name" value="UDP-N-acetylenolpyruvoylglucosamine reductase"/>
    <property type="match status" value="1"/>
</dbReference>
<dbReference type="FunFam" id="3.90.78.10:FF:000002">
    <property type="entry name" value="UDP-N-acetylenolpyruvoylglucosamine reductase"/>
    <property type="match status" value="1"/>
</dbReference>
<dbReference type="Gene3D" id="3.30.465.10">
    <property type="match status" value="1"/>
</dbReference>
<dbReference type="Gene3D" id="3.90.78.10">
    <property type="entry name" value="UDP-N-acetylenolpyruvoylglucosamine reductase, C-terminal domain"/>
    <property type="match status" value="1"/>
</dbReference>
<dbReference type="Gene3D" id="3.30.43.10">
    <property type="entry name" value="Uridine Diphospho-n-acetylenolpyruvylglucosamine Reductase, domain 2"/>
    <property type="match status" value="1"/>
</dbReference>
<dbReference type="HAMAP" id="MF_00037">
    <property type="entry name" value="MurB"/>
    <property type="match status" value="1"/>
</dbReference>
<dbReference type="InterPro" id="IPR016166">
    <property type="entry name" value="FAD-bd_PCMH"/>
</dbReference>
<dbReference type="InterPro" id="IPR036318">
    <property type="entry name" value="FAD-bd_PCMH-like_sf"/>
</dbReference>
<dbReference type="InterPro" id="IPR016167">
    <property type="entry name" value="FAD-bd_PCMH_sub1"/>
</dbReference>
<dbReference type="InterPro" id="IPR016169">
    <property type="entry name" value="FAD-bd_PCMH_sub2"/>
</dbReference>
<dbReference type="InterPro" id="IPR003170">
    <property type="entry name" value="MurB"/>
</dbReference>
<dbReference type="InterPro" id="IPR011601">
    <property type="entry name" value="MurB_C"/>
</dbReference>
<dbReference type="InterPro" id="IPR036635">
    <property type="entry name" value="MurB_C_sf"/>
</dbReference>
<dbReference type="InterPro" id="IPR006094">
    <property type="entry name" value="Oxid_FAD_bind_N"/>
</dbReference>
<dbReference type="NCBIfam" id="TIGR00179">
    <property type="entry name" value="murB"/>
    <property type="match status" value="1"/>
</dbReference>
<dbReference type="NCBIfam" id="NF000755">
    <property type="entry name" value="PRK00046.1"/>
    <property type="match status" value="1"/>
</dbReference>
<dbReference type="NCBIfam" id="NF010478">
    <property type="entry name" value="PRK13903.1"/>
    <property type="match status" value="1"/>
</dbReference>
<dbReference type="PANTHER" id="PTHR21071">
    <property type="entry name" value="UDP-N-ACETYLENOLPYRUVOYLGLUCOSAMINE REDUCTASE"/>
    <property type="match status" value="1"/>
</dbReference>
<dbReference type="PANTHER" id="PTHR21071:SF4">
    <property type="entry name" value="UDP-N-ACETYLENOLPYRUVOYLGLUCOSAMINE REDUCTASE"/>
    <property type="match status" value="1"/>
</dbReference>
<dbReference type="Pfam" id="PF01565">
    <property type="entry name" value="FAD_binding_4"/>
    <property type="match status" value="1"/>
</dbReference>
<dbReference type="Pfam" id="PF02873">
    <property type="entry name" value="MurB_C"/>
    <property type="match status" value="1"/>
</dbReference>
<dbReference type="SUPFAM" id="SSF56176">
    <property type="entry name" value="FAD-binding/transporter-associated domain-like"/>
    <property type="match status" value="1"/>
</dbReference>
<dbReference type="SUPFAM" id="SSF56194">
    <property type="entry name" value="Uridine diphospho-N-Acetylenolpyruvylglucosamine reductase, MurB, C-terminal domain"/>
    <property type="match status" value="1"/>
</dbReference>
<dbReference type="PROSITE" id="PS51387">
    <property type="entry name" value="FAD_PCMH"/>
    <property type="match status" value="1"/>
</dbReference>
<proteinExistence type="inferred from homology"/>
<feature type="chain" id="PRO_0000224719" description="UDP-N-acetylenolpyruvoylglucosamine reductase">
    <location>
        <begin position="1"/>
        <end position="342"/>
    </location>
</feature>
<feature type="domain" description="FAD-binding PCMH-type" evidence="1">
    <location>
        <begin position="13"/>
        <end position="183"/>
    </location>
</feature>
<feature type="active site" evidence="1">
    <location>
        <position position="159"/>
    </location>
</feature>
<feature type="active site" description="Proton donor" evidence="1">
    <location>
        <position position="229"/>
    </location>
</feature>
<feature type="active site" evidence="1">
    <location>
        <position position="325"/>
    </location>
</feature>
<evidence type="ECO:0000255" key="1">
    <source>
        <dbReference type="HAMAP-Rule" id="MF_00037"/>
    </source>
</evidence>
<keyword id="KW-0131">Cell cycle</keyword>
<keyword id="KW-0132">Cell division</keyword>
<keyword id="KW-0133">Cell shape</keyword>
<keyword id="KW-0961">Cell wall biogenesis/degradation</keyword>
<keyword id="KW-0963">Cytoplasm</keyword>
<keyword id="KW-0274">FAD</keyword>
<keyword id="KW-0285">Flavoprotein</keyword>
<keyword id="KW-0521">NADP</keyword>
<keyword id="KW-0560">Oxidoreductase</keyword>
<keyword id="KW-0573">Peptidoglycan synthesis</keyword>
<keyword id="KW-1185">Reference proteome</keyword>
<accession>Q32AE8</accession>
<sequence>MNHSLKPWNTFGIDHNAQHIVCAEDEQQLLNAWQHATAEGQPVLILGEGSNVLFLEDYRGTVIINRIKGIEIHDEPDAWYLHVGAGENWHRLVKYTLQEGMPGLENLALIPGCVGSSPIQNIGAYGVELQRVCAYVDCVELATGKQVRLTAKECRFGYRDSIFKHEYQDRFAIVAVGLRLPKEWQPVLTYGDLTRLEPTTVTPQQVFNAVCHMRTTKLPDPKVNGNAGSFFKNPVVSAETAKALLSQFPTAPNYPQADGSVKLAAGWLIDQCQLKGMQMGGAAVHRQQALVLINEDNAKSEDVVQLAHHVRQKVGEKFNVWLEPEVRFIGASGEVSAVETIS</sequence>
<comment type="function">
    <text evidence="1">Cell wall formation.</text>
</comment>
<comment type="catalytic activity">
    <reaction evidence="1">
        <text>UDP-N-acetyl-alpha-D-muramate + NADP(+) = UDP-N-acetyl-3-O-(1-carboxyvinyl)-alpha-D-glucosamine + NADPH + H(+)</text>
        <dbReference type="Rhea" id="RHEA:12248"/>
        <dbReference type="ChEBI" id="CHEBI:15378"/>
        <dbReference type="ChEBI" id="CHEBI:57783"/>
        <dbReference type="ChEBI" id="CHEBI:58349"/>
        <dbReference type="ChEBI" id="CHEBI:68483"/>
        <dbReference type="ChEBI" id="CHEBI:70757"/>
        <dbReference type="EC" id="1.3.1.98"/>
    </reaction>
</comment>
<comment type="cofactor">
    <cofactor evidence="1">
        <name>FAD</name>
        <dbReference type="ChEBI" id="CHEBI:57692"/>
    </cofactor>
</comment>
<comment type="pathway">
    <text evidence="1">Cell wall biogenesis; peptidoglycan biosynthesis.</text>
</comment>
<comment type="subcellular location">
    <subcellularLocation>
        <location evidence="1">Cytoplasm</location>
    </subcellularLocation>
</comment>
<comment type="similarity">
    <text evidence="1">Belongs to the MurB family.</text>
</comment>
<organism>
    <name type="scientific">Shigella dysenteriae serotype 1 (strain Sd197)</name>
    <dbReference type="NCBI Taxonomy" id="300267"/>
    <lineage>
        <taxon>Bacteria</taxon>
        <taxon>Pseudomonadati</taxon>
        <taxon>Pseudomonadota</taxon>
        <taxon>Gammaproteobacteria</taxon>
        <taxon>Enterobacterales</taxon>
        <taxon>Enterobacteriaceae</taxon>
        <taxon>Shigella</taxon>
    </lineage>
</organism>
<reference key="1">
    <citation type="journal article" date="2005" name="Nucleic Acids Res.">
        <title>Genome dynamics and diversity of Shigella species, the etiologic agents of bacillary dysentery.</title>
        <authorList>
            <person name="Yang F."/>
            <person name="Yang J."/>
            <person name="Zhang X."/>
            <person name="Chen L."/>
            <person name="Jiang Y."/>
            <person name="Yan Y."/>
            <person name="Tang X."/>
            <person name="Wang J."/>
            <person name="Xiong Z."/>
            <person name="Dong J."/>
            <person name="Xue Y."/>
            <person name="Zhu Y."/>
            <person name="Xu X."/>
            <person name="Sun L."/>
            <person name="Chen S."/>
            <person name="Nie H."/>
            <person name="Peng J."/>
            <person name="Xu J."/>
            <person name="Wang Y."/>
            <person name="Yuan Z."/>
            <person name="Wen Y."/>
            <person name="Yao Z."/>
            <person name="Shen Y."/>
            <person name="Qiang B."/>
            <person name="Hou Y."/>
            <person name="Yu J."/>
            <person name="Jin Q."/>
        </authorList>
    </citation>
    <scope>NUCLEOTIDE SEQUENCE [LARGE SCALE GENOMIC DNA]</scope>
    <source>
        <strain>Sd197</strain>
    </source>
</reference>
<name>MURB_SHIDS</name>
<protein>
    <recommendedName>
        <fullName evidence="1">UDP-N-acetylenolpyruvoylglucosamine reductase</fullName>
        <ecNumber evidence="1">1.3.1.98</ecNumber>
    </recommendedName>
    <alternativeName>
        <fullName evidence="1">UDP-N-acetylmuramate dehydrogenase</fullName>
    </alternativeName>
</protein>